<organism>
    <name type="scientific">Magnetococcus marinus (strain ATCC BAA-1437 / JCM 17883 / MC-1)</name>
    <dbReference type="NCBI Taxonomy" id="156889"/>
    <lineage>
        <taxon>Bacteria</taxon>
        <taxon>Pseudomonadati</taxon>
        <taxon>Pseudomonadota</taxon>
        <taxon>Alphaproteobacteria</taxon>
        <taxon>Magnetococcales</taxon>
        <taxon>Magnetococcaceae</taxon>
        <taxon>Magnetococcus</taxon>
    </lineage>
</organism>
<reference key="1">
    <citation type="journal article" date="2009" name="Appl. Environ. Microbiol.">
        <title>Complete genome sequence of the chemolithoautotrophic marine magnetotactic coccus strain MC-1.</title>
        <authorList>
            <person name="Schubbe S."/>
            <person name="Williams T.J."/>
            <person name="Xie G."/>
            <person name="Kiss H.E."/>
            <person name="Brettin T.S."/>
            <person name="Martinez D."/>
            <person name="Ross C.A."/>
            <person name="Schuler D."/>
            <person name="Cox B.L."/>
            <person name="Nealson K.H."/>
            <person name="Bazylinski D.A."/>
        </authorList>
    </citation>
    <scope>NUCLEOTIDE SEQUENCE [LARGE SCALE GENOMIC DNA]</scope>
    <source>
        <strain>ATCC BAA-1437 / JCM 17883 / MC-1</strain>
    </source>
</reference>
<comment type="function">
    <text evidence="1">Catalyzes the methylthiolation of N6-(dimethylallyl)adenosine (i(6)A), leading to the formation of 2-methylthio-N6-(dimethylallyl)adenosine (ms(2)i(6)A) at position 37 in tRNAs that read codons beginning with uridine.</text>
</comment>
<comment type="catalytic activity">
    <reaction evidence="1">
        <text>N(6)-dimethylallyladenosine(37) in tRNA + (sulfur carrier)-SH + AH2 + 2 S-adenosyl-L-methionine = 2-methylsulfanyl-N(6)-dimethylallyladenosine(37) in tRNA + (sulfur carrier)-H + 5'-deoxyadenosine + L-methionine + A + S-adenosyl-L-homocysteine + 2 H(+)</text>
        <dbReference type="Rhea" id="RHEA:37067"/>
        <dbReference type="Rhea" id="RHEA-COMP:10375"/>
        <dbReference type="Rhea" id="RHEA-COMP:10376"/>
        <dbReference type="Rhea" id="RHEA-COMP:14737"/>
        <dbReference type="Rhea" id="RHEA-COMP:14739"/>
        <dbReference type="ChEBI" id="CHEBI:13193"/>
        <dbReference type="ChEBI" id="CHEBI:15378"/>
        <dbReference type="ChEBI" id="CHEBI:17319"/>
        <dbReference type="ChEBI" id="CHEBI:17499"/>
        <dbReference type="ChEBI" id="CHEBI:29917"/>
        <dbReference type="ChEBI" id="CHEBI:57844"/>
        <dbReference type="ChEBI" id="CHEBI:57856"/>
        <dbReference type="ChEBI" id="CHEBI:59789"/>
        <dbReference type="ChEBI" id="CHEBI:64428"/>
        <dbReference type="ChEBI" id="CHEBI:74415"/>
        <dbReference type="ChEBI" id="CHEBI:74417"/>
        <dbReference type="EC" id="2.8.4.3"/>
    </reaction>
</comment>
<comment type="cofactor">
    <cofactor evidence="1">
        <name>[4Fe-4S] cluster</name>
        <dbReference type="ChEBI" id="CHEBI:49883"/>
    </cofactor>
    <text evidence="1">Binds 2 [4Fe-4S] clusters. One cluster is coordinated with 3 cysteines and an exchangeable S-adenosyl-L-methionine.</text>
</comment>
<comment type="subunit">
    <text evidence="1">Monomer.</text>
</comment>
<comment type="subcellular location">
    <subcellularLocation>
        <location evidence="1">Cytoplasm</location>
    </subcellularLocation>
</comment>
<comment type="similarity">
    <text evidence="1">Belongs to the methylthiotransferase family. MiaB subfamily.</text>
</comment>
<accession>A0L7K3</accession>
<dbReference type="EC" id="2.8.4.3" evidence="1"/>
<dbReference type="EMBL" id="CP000471">
    <property type="protein sequence ID" value="ABK43946.1"/>
    <property type="molecule type" value="Genomic_DNA"/>
</dbReference>
<dbReference type="RefSeq" id="WP_011713099.1">
    <property type="nucleotide sequence ID" value="NC_008576.1"/>
</dbReference>
<dbReference type="SMR" id="A0L7K3"/>
<dbReference type="STRING" id="156889.Mmc1_1435"/>
<dbReference type="KEGG" id="mgm:Mmc1_1435"/>
<dbReference type="eggNOG" id="COG0621">
    <property type="taxonomic scope" value="Bacteria"/>
</dbReference>
<dbReference type="HOGENOM" id="CLU_018697_2_0_5"/>
<dbReference type="OrthoDB" id="9805215at2"/>
<dbReference type="Proteomes" id="UP000002586">
    <property type="component" value="Chromosome"/>
</dbReference>
<dbReference type="GO" id="GO:0005829">
    <property type="term" value="C:cytosol"/>
    <property type="evidence" value="ECO:0007669"/>
    <property type="project" value="TreeGrafter"/>
</dbReference>
<dbReference type="GO" id="GO:0051539">
    <property type="term" value="F:4 iron, 4 sulfur cluster binding"/>
    <property type="evidence" value="ECO:0007669"/>
    <property type="project" value="UniProtKB-UniRule"/>
</dbReference>
<dbReference type="GO" id="GO:0046872">
    <property type="term" value="F:metal ion binding"/>
    <property type="evidence" value="ECO:0007669"/>
    <property type="project" value="UniProtKB-KW"/>
</dbReference>
<dbReference type="GO" id="GO:0035597">
    <property type="term" value="F:N6-isopentenyladenosine methylthiotransferase activity"/>
    <property type="evidence" value="ECO:0007669"/>
    <property type="project" value="TreeGrafter"/>
</dbReference>
<dbReference type="CDD" id="cd01335">
    <property type="entry name" value="Radical_SAM"/>
    <property type="match status" value="1"/>
</dbReference>
<dbReference type="FunFam" id="3.40.50.12160:FF:000003">
    <property type="entry name" value="CDK5 regulatory subunit-associated protein 1"/>
    <property type="match status" value="1"/>
</dbReference>
<dbReference type="FunFam" id="3.80.30.20:FF:000001">
    <property type="entry name" value="tRNA-2-methylthio-N(6)-dimethylallyladenosine synthase 2"/>
    <property type="match status" value="1"/>
</dbReference>
<dbReference type="Gene3D" id="3.40.50.12160">
    <property type="entry name" value="Methylthiotransferase, N-terminal domain"/>
    <property type="match status" value="1"/>
</dbReference>
<dbReference type="Gene3D" id="3.80.30.20">
    <property type="entry name" value="tm_1862 like domain"/>
    <property type="match status" value="1"/>
</dbReference>
<dbReference type="HAMAP" id="MF_01864">
    <property type="entry name" value="tRNA_metthiotr_MiaB"/>
    <property type="match status" value="1"/>
</dbReference>
<dbReference type="InterPro" id="IPR006638">
    <property type="entry name" value="Elp3/MiaA/NifB-like_rSAM"/>
</dbReference>
<dbReference type="InterPro" id="IPR005839">
    <property type="entry name" value="Methylthiotransferase"/>
</dbReference>
<dbReference type="InterPro" id="IPR020612">
    <property type="entry name" value="Methylthiotransferase_CS"/>
</dbReference>
<dbReference type="InterPro" id="IPR013848">
    <property type="entry name" value="Methylthiotransferase_N"/>
</dbReference>
<dbReference type="InterPro" id="IPR038135">
    <property type="entry name" value="Methylthiotransferase_N_sf"/>
</dbReference>
<dbReference type="InterPro" id="IPR006463">
    <property type="entry name" value="MiaB_methiolase"/>
</dbReference>
<dbReference type="InterPro" id="IPR007197">
    <property type="entry name" value="rSAM"/>
</dbReference>
<dbReference type="InterPro" id="IPR023404">
    <property type="entry name" value="rSAM_horseshoe"/>
</dbReference>
<dbReference type="InterPro" id="IPR002792">
    <property type="entry name" value="TRAM_dom"/>
</dbReference>
<dbReference type="NCBIfam" id="TIGR01574">
    <property type="entry name" value="miaB-methiolase"/>
    <property type="match status" value="1"/>
</dbReference>
<dbReference type="NCBIfam" id="TIGR00089">
    <property type="entry name" value="MiaB/RimO family radical SAM methylthiotransferase"/>
    <property type="match status" value="1"/>
</dbReference>
<dbReference type="PANTHER" id="PTHR43020">
    <property type="entry name" value="CDK5 REGULATORY SUBUNIT-ASSOCIATED PROTEIN 1"/>
    <property type="match status" value="1"/>
</dbReference>
<dbReference type="PANTHER" id="PTHR43020:SF2">
    <property type="entry name" value="MITOCHONDRIAL TRNA METHYLTHIOTRANSFERASE CDK5RAP1"/>
    <property type="match status" value="1"/>
</dbReference>
<dbReference type="Pfam" id="PF04055">
    <property type="entry name" value="Radical_SAM"/>
    <property type="match status" value="1"/>
</dbReference>
<dbReference type="Pfam" id="PF01938">
    <property type="entry name" value="TRAM"/>
    <property type="match status" value="1"/>
</dbReference>
<dbReference type="Pfam" id="PF00919">
    <property type="entry name" value="UPF0004"/>
    <property type="match status" value="1"/>
</dbReference>
<dbReference type="SFLD" id="SFLDF00273">
    <property type="entry name" value="(dimethylallyl)adenosine_tRNA"/>
    <property type="match status" value="1"/>
</dbReference>
<dbReference type="SFLD" id="SFLDG01082">
    <property type="entry name" value="B12-binding_domain_containing"/>
    <property type="match status" value="1"/>
</dbReference>
<dbReference type="SFLD" id="SFLDG01061">
    <property type="entry name" value="methylthiotransferase"/>
    <property type="match status" value="1"/>
</dbReference>
<dbReference type="SMART" id="SM00729">
    <property type="entry name" value="Elp3"/>
    <property type="match status" value="1"/>
</dbReference>
<dbReference type="SUPFAM" id="SSF102114">
    <property type="entry name" value="Radical SAM enzymes"/>
    <property type="match status" value="1"/>
</dbReference>
<dbReference type="PROSITE" id="PS51449">
    <property type="entry name" value="MTTASE_N"/>
    <property type="match status" value="1"/>
</dbReference>
<dbReference type="PROSITE" id="PS01278">
    <property type="entry name" value="MTTASE_RADICAL"/>
    <property type="match status" value="1"/>
</dbReference>
<dbReference type="PROSITE" id="PS51918">
    <property type="entry name" value="RADICAL_SAM"/>
    <property type="match status" value="1"/>
</dbReference>
<dbReference type="PROSITE" id="PS50926">
    <property type="entry name" value="TRAM"/>
    <property type="match status" value="1"/>
</dbReference>
<protein>
    <recommendedName>
        <fullName evidence="1">tRNA-2-methylthio-N(6)-dimethylallyladenosine synthase</fullName>
        <ecNumber evidence="1">2.8.4.3</ecNumber>
    </recommendedName>
    <alternativeName>
        <fullName evidence="1">(Dimethylallyl)adenosine tRNA methylthiotransferase MiaB</fullName>
    </alternativeName>
    <alternativeName>
        <fullName evidence="1">tRNA-i(6)A37 methylthiotransferase</fullName>
    </alternativeName>
</protein>
<sequence length="437" mass="48533">MKHLYIKTFGCQMNSYDSTRMADLLGESHAFQSTDDPEKADLIILNTCHIREKAEDKLFSELGRLRPLAERGVILAVGGCVGQAEGRTIFSRAPYVRMVFGPQNYHKLPQMIQRALDGETRVIAEDIPSVDKFDNLPQVRAQGVVGQVTVQEGCDKFCAFCVVPYTRGREWSRPVAAILAETEALAQQGVREVLLLGQNVNAYAGVDEEGVSYDLALLIRRVALIEGIERIRFVTSHPVDMNEDLVEVFGEIEQLAPYLHLPIQSGSDAILAAMQRGHTVEEYCTWVEKVRAVCPDVALASDFIVGFPGETEQDFQATLDLISRLGFDHAYSFKYSSRPGTPAADMPEQVDEAEKSRRLERLQQLLNTQQLQRNKARVGRRESVLVEGVSKKRDGELSGRSGTLRTVNFAGPVALIGQFVDVEIVEGLPNSLRGRLV</sequence>
<evidence type="ECO:0000255" key="1">
    <source>
        <dbReference type="HAMAP-Rule" id="MF_01864"/>
    </source>
</evidence>
<evidence type="ECO:0000255" key="2">
    <source>
        <dbReference type="PROSITE-ProRule" id="PRU01266"/>
    </source>
</evidence>
<name>MIAB_MAGMM</name>
<keyword id="KW-0004">4Fe-4S</keyword>
<keyword id="KW-0963">Cytoplasm</keyword>
<keyword id="KW-0408">Iron</keyword>
<keyword id="KW-0411">Iron-sulfur</keyword>
<keyword id="KW-0479">Metal-binding</keyword>
<keyword id="KW-1185">Reference proteome</keyword>
<keyword id="KW-0949">S-adenosyl-L-methionine</keyword>
<keyword id="KW-0808">Transferase</keyword>
<keyword id="KW-0819">tRNA processing</keyword>
<proteinExistence type="inferred from homology"/>
<feature type="chain" id="PRO_0000374366" description="tRNA-2-methylthio-N(6)-dimethylallyladenosine synthase">
    <location>
        <begin position="1"/>
        <end position="437"/>
    </location>
</feature>
<feature type="domain" description="MTTase N-terminal" evidence="1">
    <location>
        <begin position="2"/>
        <end position="117"/>
    </location>
</feature>
<feature type="domain" description="Radical SAM core" evidence="2">
    <location>
        <begin position="140"/>
        <end position="372"/>
    </location>
</feature>
<feature type="domain" description="TRAM" evidence="1">
    <location>
        <begin position="375"/>
        <end position="437"/>
    </location>
</feature>
<feature type="binding site" evidence="1">
    <location>
        <position position="11"/>
    </location>
    <ligand>
        <name>[4Fe-4S] cluster</name>
        <dbReference type="ChEBI" id="CHEBI:49883"/>
        <label>1</label>
    </ligand>
</feature>
<feature type="binding site" evidence="1">
    <location>
        <position position="48"/>
    </location>
    <ligand>
        <name>[4Fe-4S] cluster</name>
        <dbReference type="ChEBI" id="CHEBI:49883"/>
        <label>1</label>
    </ligand>
</feature>
<feature type="binding site" evidence="1">
    <location>
        <position position="80"/>
    </location>
    <ligand>
        <name>[4Fe-4S] cluster</name>
        <dbReference type="ChEBI" id="CHEBI:49883"/>
        <label>1</label>
    </ligand>
</feature>
<feature type="binding site" evidence="1">
    <location>
        <position position="154"/>
    </location>
    <ligand>
        <name>[4Fe-4S] cluster</name>
        <dbReference type="ChEBI" id="CHEBI:49883"/>
        <label>2</label>
        <note>4Fe-4S-S-AdoMet</note>
    </ligand>
</feature>
<feature type="binding site" evidence="1">
    <location>
        <position position="158"/>
    </location>
    <ligand>
        <name>[4Fe-4S] cluster</name>
        <dbReference type="ChEBI" id="CHEBI:49883"/>
        <label>2</label>
        <note>4Fe-4S-S-AdoMet</note>
    </ligand>
</feature>
<feature type="binding site" evidence="1">
    <location>
        <position position="161"/>
    </location>
    <ligand>
        <name>[4Fe-4S] cluster</name>
        <dbReference type="ChEBI" id="CHEBI:49883"/>
        <label>2</label>
        <note>4Fe-4S-S-AdoMet</note>
    </ligand>
</feature>
<gene>
    <name evidence="1" type="primary">miaB</name>
    <name type="ordered locus">Mmc1_1435</name>
</gene>